<reference key="1">
    <citation type="journal article" date="1989" name="J. Biol. Chem.">
        <title>Sequence determination and cDNA cloning of eukaryotic initiation factor 4D, the hypusine-containing protein.</title>
        <authorList>
            <person name="Smit-Mcbride Z."/>
            <person name="Dever T.E."/>
            <person name="Hershey J.W.B."/>
            <person name="Merrick W.C."/>
        </authorList>
    </citation>
    <scope>PROTEIN SEQUENCE OF 2-154</scope>
    <scope>HYPUSINE AT LYS-50</scope>
    <scope>BLOCKED N-TERMINUS</scope>
</reference>
<reference evidence="7" key="2">
    <citation type="journal article" date="2023" name="Nature">
        <title>A molecular network of conserved factors keeps ribosomes dormant in the egg.</title>
        <authorList>
            <person name="Leesch F."/>
            <person name="Lorenzo-Orts L."/>
            <person name="Pribitzer C."/>
            <person name="Grishkovskaya I."/>
            <person name="Roehsner J."/>
            <person name="Chugunova A."/>
            <person name="Matzinger M."/>
            <person name="Roitinger E."/>
            <person name="Belacic K."/>
            <person name="Kandolf S."/>
            <person name="Lin T.Y."/>
            <person name="Mechtler K."/>
            <person name="Meinhart A."/>
            <person name="Haselbach D."/>
            <person name="Pauli A."/>
        </authorList>
    </citation>
    <scope>STRUCTURE BY ELECTRON MICROSCOPY (2.30 ANGSTROMS)</scope>
</reference>
<sequence length="154" mass="16816">MADDLDFETGDAGASATFPMQCSALRKNGFVVLKGRPCKIVEMSTSKTGKHGHAKVHLVGIDIFTGKKYEDICPSTHNMDVPNIKRNDFQLIGIQDGYLSLLQDSGEVREDLRLPEGDLGKEIEQKYDSGEEILITVLSAMTEEAAVAIKAMAK</sequence>
<dbReference type="PIR" id="A31486">
    <property type="entry name" value="A31486"/>
</dbReference>
<dbReference type="PDB" id="7OYD">
    <property type="method" value="EM"/>
    <property type="resolution" value="2.30 A"/>
    <property type="chains" value="t=1-154"/>
</dbReference>
<dbReference type="PDBsum" id="7OYD"/>
<dbReference type="BMRB" id="P10160"/>
<dbReference type="EMDB" id="EMD-13114"/>
<dbReference type="SMR" id="P10160"/>
<dbReference type="FunCoup" id="P10160">
    <property type="interactions" value="1433"/>
</dbReference>
<dbReference type="STRING" id="9986.ENSOCUP00000033604"/>
<dbReference type="PaxDb" id="9986-ENSOCUP00000013104"/>
<dbReference type="eggNOG" id="KOG3271">
    <property type="taxonomic scope" value="Eukaryota"/>
</dbReference>
<dbReference type="InParanoid" id="P10160"/>
<dbReference type="Proteomes" id="UP000001811">
    <property type="component" value="Unplaced"/>
</dbReference>
<dbReference type="GO" id="GO:0005789">
    <property type="term" value="C:endoplasmic reticulum membrane"/>
    <property type="evidence" value="ECO:0007669"/>
    <property type="project" value="UniProtKB-SubCell"/>
</dbReference>
<dbReference type="GO" id="GO:0005634">
    <property type="term" value="C:nucleus"/>
    <property type="evidence" value="ECO:0007669"/>
    <property type="project" value="UniProtKB-SubCell"/>
</dbReference>
<dbReference type="GO" id="GO:0043022">
    <property type="term" value="F:ribosome binding"/>
    <property type="evidence" value="ECO:0007669"/>
    <property type="project" value="InterPro"/>
</dbReference>
<dbReference type="GO" id="GO:0003723">
    <property type="term" value="F:RNA binding"/>
    <property type="evidence" value="ECO:0007669"/>
    <property type="project" value="UniProtKB-KW"/>
</dbReference>
<dbReference type="GO" id="GO:0003746">
    <property type="term" value="F:translation elongation factor activity"/>
    <property type="evidence" value="ECO:0007669"/>
    <property type="project" value="UniProtKB-KW"/>
</dbReference>
<dbReference type="GO" id="GO:0045727">
    <property type="term" value="P:positive regulation of translation"/>
    <property type="evidence" value="ECO:0000314"/>
    <property type="project" value="UniProtKB"/>
</dbReference>
<dbReference type="GO" id="GO:0045901">
    <property type="term" value="P:positive regulation of translational elongation"/>
    <property type="evidence" value="ECO:0007669"/>
    <property type="project" value="InterPro"/>
</dbReference>
<dbReference type="GO" id="GO:0045905">
    <property type="term" value="P:positive regulation of translational termination"/>
    <property type="evidence" value="ECO:0007669"/>
    <property type="project" value="InterPro"/>
</dbReference>
<dbReference type="GO" id="GO:0006414">
    <property type="term" value="P:translational elongation"/>
    <property type="evidence" value="ECO:0000250"/>
    <property type="project" value="UniProtKB"/>
</dbReference>
<dbReference type="CDD" id="cd04468">
    <property type="entry name" value="S1_eIF5A"/>
    <property type="match status" value="1"/>
</dbReference>
<dbReference type="FunFam" id="2.30.30.30:FF:000007">
    <property type="entry name" value="Eukaryotic translation initiation factor 5A"/>
    <property type="match status" value="1"/>
</dbReference>
<dbReference type="FunFam" id="2.40.50.140:FF:000034">
    <property type="entry name" value="Eukaryotic translation initiation factor 5A"/>
    <property type="match status" value="1"/>
</dbReference>
<dbReference type="Gene3D" id="2.30.30.30">
    <property type="match status" value="1"/>
</dbReference>
<dbReference type="Gene3D" id="2.40.50.140">
    <property type="entry name" value="Nucleic acid-binding proteins"/>
    <property type="match status" value="1"/>
</dbReference>
<dbReference type="InterPro" id="IPR001884">
    <property type="entry name" value="IF5A-like"/>
</dbReference>
<dbReference type="InterPro" id="IPR048670">
    <property type="entry name" value="IF5A-like_N"/>
</dbReference>
<dbReference type="InterPro" id="IPR012340">
    <property type="entry name" value="NA-bd_OB-fold"/>
</dbReference>
<dbReference type="InterPro" id="IPR014722">
    <property type="entry name" value="Rib_uL2_dom2"/>
</dbReference>
<dbReference type="InterPro" id="IPR019769">
    <property type="entry name" value="Trans_elong_IF5A_hypusine_site"/>
</dbReference>
<dbReference type="InterPro" id="IPR020189">
    <property type="entry name" value="Transl_elong_IF5A_C"/>
</dbReference>
<dbReference type="InterPro" id="IPR008991">
    <property type="entry name" value="Translation_prot_SH3-like_sf"/>
</dbReference>
<dbReference type="NCBIfam" id="TIGR00037">
    <property type="entry name" value="eIF_5A"/>
    <property type="match status" value="1"/>
</dbReference>
<dbReference type="PANTHER" id="PTHR11673">
    <property type="entry name" value="TRANSLATION INITIATION FACTOR 5A FAMILY MEMBER"/>
    <property type="match status" value="1"/>
</dbReference>
<dbReference type="Pfam" id="PF01287">
    <property type="entry name" value="eIF-5a"/>
    <property type="match status" value="1"/>
</dbReference>
<dbReference type="Pfam" id="PF21485">
    <property type="entry name" value="IF5A-like_N"/>
    <property type="match status" value="1"/>
</dbReference>
<dbReference type="PIRSF" id="PIRSF003025">
    <property type="entry name" value="eIF5A"/>
    <property type="match status" value="1"/>
</dbReference>
<dbReference type="SMART" id="SM01376">
    <property type="entry name" value="eIF-5a"/>
    <property type="match status" value="1"/>
</dbReference>
<dbReference type="SUPFAM" id="SSF50249">
    <property type="entry name" value="Nucleic acid-binding proteins"/>
    <property type="match status" value="1"/>
</dbReference>
<dbReference type="SUPFAM" id="SSF50104">
    <property type="entry name" value="Translation proteins SH3-like domain"/>
    <property type="match status" value="1"/>
</dbReference>
<dbReference type="PROSITE" id="PS00302">
    <property type="entry name" value="IF5A_HYPUSINE"/>
    <property type="match status" value="1"/>
</dbReference>
<proteinExistence type="evidence at protein level"/>
<protein>
    <recommendedName>
        <fullName evidence="2">Eukaryotic translation initiation factor 5A-1</fullName>
        <shortName>eIF-5A-1</shortName>
        <shortName>eIF-5A1</shortName>
    </recommendedName>
    <alternativeName>
        <fullName>Eukaryotic initiation factor 5A isoform 1</fullName>
        <shortName>eIF-5A</shortName>
    </alternativeName>
    <alternativeName>
        <fullName>eIF-4D</fullName>
    </alternativeName>
</protein>
<comment type="function">
    <text evidence="1 2">Translation factor that promotes translation elongation and termination, particularly upon ribosome stalling at specific amino acid sequence contexts (By similarity). Binds between the exit (E) and peptidyl (P) site of the ribosome and promotes rescue of stalled ribosome: specifically required for efficient translation of polyproline-containing peptides as well as other motifs that stall the ribosome. Acts as a ribosome quality control (RQC) cofactor by joining the RQC complex to facilitate peptidyl transfer during CAT tailing step (By similarity). Also involved in actin dynamics and cell cycle progression, mRNA decay and probably in a pathway involved in stress response and maintenance of cell wall integrity. With syntenin SDCBP, functions as a regulator of p53/TP53 and p53/TP53-dependent apoptosis. Also regulates TNF-alpha-mediated apoptosis. Mediates effects of polyamines on neuronal process extension and survival (By similarity). Is required for autophagy by assisting the ribosome in translating the ATG3 protein at a specific amino acid sequence, the 'ASP-ASP-Gly' motif, leading to the increase of the efficiency of ATG3 translation and facilitation of LC3B lipidation and autophagosome formation (By similarity).</text>
</comment>
<comment type="subunit">
    <text evidence="2 4">Binds to 80S ribosomes. Actively translating ribosomes show mutually exclusive binding of eIF5a (EIF5A or EIF5A2) and EEF2/eEF2 (By similarity). Interacts with DAPL1; interaction takes place at the polypeptide exit tunnel of hibernating ribosomes and prevents translation (By similarity). Interacts with DHPS. Interacts with SDCBP. Interacts with DOHH (By similarity).</text>
</comment>
<comment type="subcellular location">
    <subcellularLocation>
        <location evidence="2">Cytoplasm</location>
    </subcellularLocation>
    <subcellularLocation>
        <location evidence="2">Nucleus</location>
    </subcellularLocation>
    <subcellularLocation>
        <location evidence="2">Endoplasmic reticulum membrane</location>
        <topology evidence="2">Peripheral membrane protein</topology>
        <orientation evidence="2">Cytoplasmic side</orientation>
    </subcellularLocation>
    <text evidence="2">Hypusine modification promotes the nuclear export and cytoplasmic localization and there was a dynamic shift in the localization from predominantly cytoplasmic to primarily nuclear under apoptotic inducing conditions. Nuclear export of hypusinated protein is mediated by XPO4.</text>
</comment>
<comment type="PTM">
    <text evidence="2">Acetylated by PCAF/KAT2B, regulating its subcellular localization (By similarity). Deacetylated by SIRT2 (By similarity).</text>
</comment>
<comment type="PTM">
    <text evidence="5">Lys-50 undergoes hypusination, a unique post-translational modification that consists in the addition of a butylamino group from spermidine to lysine side chain, leading to the formation of the unusual amino acid hypusine. eIF-5As are the only known proteins to undergo this modification, which is essential for their function.</text>
</comment>
<comment type="PTM">
    <text evidence="5">The N-terminus is blocked.</text>
</comment>
<comment type="similarity">
    <text evidence="6">Belongs to the eIF-5A family.</text>
</comment>
<organism>
    <name type="scientific">Oryctolagus cuniculus</name>
    <name type="common">Rabbit</name>
    <dbReference type="NCBI Taxonomy" id="9986"/>
    <lineage>
        <taxon>Eukaryota</taxon>
        <taxon>Metazoa</taxon>
        <taxon>Chordata</taxon>
        <taxon>Craniata</taxon>
        <taxon>Vertebrata</taxon>
        <taxon>Euteleostomi</taxon>
        <taxon>Mammalia</taxon>
        <taxon>Eutheria</taxon>
        <taxon>Euarchontoglires</taxon>
        <taxon>Glires</taxon>
        <taxon>Lagomorpha</taxon>
        <taxon>Leporidae</taxon>
        <taxon>Oryctolagus</taxon>
    </lineage>
</organism>
<evidence type="ECO:0000250" key="1">
    <source>
        <dbReference type="UniProtKB" id="P23301"/>
    </source>
</evidence>
<evidence type="ECO:0000250" key="2">
    <source>
        <dbReference type="UniProtKB" id="P63241"/>
    </source>
</evidence>
<evidence type="ECO:0000250" key="3">
    <source>
        <dbReference type="UniProtKB" id="P63242"/>
    </source>
</evidence>
<evidence type="ECO:0000250" key="4">
    <source>
        <dbReference type="UniProtKB" id="Q6NX89"/>
    </source>
</evidence>
<evidence type="ECO:0000269" key="5">
    <source>
    </source>
</evidence>
<evidence type="ECO:0000305" key="6"/>
<evidence type="ECO:0007744" key="7">
    <source>
        <dbReference type="PDB" id="7OYD"/>
    </source>
</evidence>
<feature type="initiator methionine" description="Removed" evidence="5">
    <location>
        <position position="1"/>
    </location>
</feature>
<feature type="chain" id="PRO_0000142453" description="Eukaryotic translation initiation factor 5A-1">
    <location>
        <begin position="2"/>
        <end position="154"/>
    </location>
</feature>
<feature type="modified residue" description="N-acetylalanine" evidence="2">
    <location>
        <position position="2"/>
    </location>
</feature>
<feature type="modified residue" description="N6-acetyllysine" evidence="2">
    <location>
        <position position="47"/>
    </location>
</feature>
<feature type="modified residue" description="Hypusine" evidence="5">
    <location>
        <position position="50"/>
    </location>
</feature>
<feature type="modified residue" description="N6-acetyllysine" evidence="3">
    <location>
        <position position="121"/>
    </location>
</feature>
<feature type="unsure residue">
    <location>
        <begin position="2"/>
        <end position="8"/>
    </location>
</feature>
<accession>P10160</accession>
<keyword id="KW-0002">3D-structure</keyword>
<keyword id="KW-0007">Acetylation</keyword>
<keyword id="KW-0963">Cytoplasm</keyword>
<keyword id="KW-0903">Direct protein sequencing</keyword>
<keyword id="KW-0251">Elongation factor</keyword>
<keyword id="KW-0256">Endoplasmic reticulum</keyword>
<keyword id="KW-0385">Hypusine</keyword>
<keyword id="KW-0472">Membrane</keyword>
<keyword id="KW-0539">Nucleus</keyword>
<keyword id="KW-0648">Protein biosynthesis</keyword>
<keyword id="KW-1185">Reference proteome</keyword>
<keyword id="KW-0694">RNA-binding</keyword>
<gene>
    <name evidence="2" type="primary">EIF5A</name>
</gene>
<name>IF5A1_RABIT</name>